<accession>B2RIE9</accession>
<proteinExistence type="inferred from homology"/>
<sequence>MDRLKYDIVVLGAGESGVGAALLAQAKGLHVFVSDYGKIAPKYKEELNRYAIPYEEGRHTEAIILEAKEIIKSPGIPDTAPVIRQAVAKEIGIVSEIEFAGRYTDAFMVCITGSNGKTTTTMWLYHTLCKAGLDVGLAGNVGFSLARQVAYDPHPYYVIELSSFQLDNMYDFRANVAILLNITPDHLDRYDHRFELYAEAKMRITRNQQPEDCFIYWEDDPFISRWVAEHPPVARLLPFAMEARTDNTTAWINEKNELVVMNLNSPFVMDEELLALSGMHNRHNAMATAIAAKAMDIKNEAIREALQDFKNVPHRLEKIARVKGVDYINDSKATNVNSTWYALESMKTRVILILGGTDKGNDYTDIENLVLSKVDGLIFLGIDNEKLHKFFDGKISRIADACSMHEAVSLAYKMASKGDTVLLSPACASFDLFQNYEDRGDQFRKEVLNL</sequence>
<protein>
    <recommendedName>
        <fullName evidence="1">UDP-N-acetylmuramoylalanine--D-glutamate ligase</fullName>
        <ecNumber evidence="1">6.3.2.9</ecNumber>
    </recommendedName>
    <alternativeName>
        <fullName evidence="1">D-glutamic acid-adding enzyme</fullName>
    </alternativeName>
    <alternativeName>
        <fullName evidence="1">UDP-N-acetylmuramoyl-L-alanyl-D-glutamate synthetase</fullName>
    </alternativeName>
</protein>
<comment type="function">
    <text evidence="1">Cell wall formation. Catalyzes the addition of glutamate to the nucleotide precursor UDP-N-acetylmuramoyl-L-alanine (UMA).</text>
</comment>
<comment type="catalytic activity">
    <reaction evidence="1">
        <text>UDP-N-acetyl-alpha-D-muramoyl-L-alanine + D-glutamate + ATP = UDP-N-acetyl-alpha-D-muramoyl-L-alanyl-D-glutamate + ADP + phosphate + H(+)</text>
        <dbReference type="Rhea" id="RHEA:16429"/>
        <dbReference type="ChEBI" id="CHEBI:15378"/>
        <dbReference type="ChEBI" id="CHEBI:29986"/>
        <dbReference type="ChEBI" id="CHEBI:30616"/>
        <dbReference type="ChEBI" id="CHEBI:43474"/>
        <dbReference type="ChEBI" id="CHEBI:83898"/>
        <dbReference type="ChEBI" id="CHEBI:83900"/>
        <dbReference type="ChEBI" id="CHEBI:456216"/>
        <dbReference type="EC" id="6.3.2.9"/>
    </reaction>
</comment>
<comment type="pathway">
    <text evidence="1">Cell wall biogenesis; peptidoglycan biosynthesis.</text>
</comment>
<comment type="subcellular location">
    <subcellularLocation>
        <location evidence="1">Cytoplasm</location>
    </subcellularLocation>
</comment>
<comment type="similarity">
    <text evidence="1">Belongs to the MurCDEF family.</text>
</comment>
<feature type="chain" id="PRO_1000130872" description="UDP-N-acetylmuramoylalanine--D-glutamate ligase">
    <location>
        <begin position="1"/>
        <end position="450"/>
    </location>
</feature>
<feature type="binding site" evidence="1">
    <location>
        <begin position="113"/>
        <end position="119"/>
    </location>
    <ligand>
        <name>ATP</name>
        <dbReference type="ChEBI" id="CHEBI:30616"/>
    </ligand>
</feature>
<reference key="1">
    <citation type="journal article" date="2008" name="DNA Res.">
        <title>Determination of the genome sequence of Porphyromonas gingivalis strain ATCC 33277 and genomic comparison with strain W83 revealed extensive genome rearrangements in P. gingivalis.</title>
        <authorList>
            <person name="Naito M."/>
            <person name="Hirakawa H."/>
            <person name="Yamashita A."/>
            <person name="Ohara N."/>
            <person name="Shoji M."/>
            <person name="Yukitake H."/>
            <person name="Nakayama K."/>
            <person name="Toh H."/>
            <person name="Yoshimura F."/>
            <person name="Kuhara S."/>
            <person name="Hattori M."/>
            <person name="Hayashi T."/>
            <person name="Nakayama K."/>
        </authorList>
    </citation>
    <scope>NUCLEOTIDE SEQUENCE [LARGE SCALE GENOMIC DNA]</scope>
    <source>
        <strain>ATCC 33277 / DSM 20709 / CIP 103683 / JCM 12257 / NCTC 11834 / 2561</strain>
    </source>
</reference>
<name>MURD_PORG3</name>
<organism>
    <name type="scientific">Porphyromonas gingivalis (strain ATCC 33277 / DSM 20709 / CIP 103683 / JCM 12257 / NCTC 11834 / 2561)</name>
    <dbReference type="NCBI Taxonomy" id="431947"/>
    <lineage>
        <taxon>Bacteria</taxon>
        <taxon>Pseudomonadati</taxon>
        <taxon>Bacteroidota</taxon>
        <taxon>Bacteroidia</taxon>
        <taxon>Bacteroidales</taxon>
        <taxon>Porphyromonadaceae</taxon>
        <taxon>Porphyromonas</taxon>
    </lineage>
</organism>
<evidence type="ECO:0000255" key="1">
    <source>
        <dbReference type="HAMAP-Rule" id="MF_00639"/>
    </source>
</evidence>
<keyword id="KW-0067">ATP-binding</keyword>
<keyword id="KW-0131">Cell cycle</keyword>
<keyword id="KW-0132">Cell division</keyword>
<keyword id="KW-0133">Cell shape</keyword>
<keyword id="KW-0961">Cell wall biogenesis/degradation</keyword>
<keyword id="KW-0963">Cytoplasm</keyword>
<keyword id="KW-0436">Ligase</keyword>
<keyword id="KW-0547">Nucleotide-binding</keyword>
<keyword id="KW-0573">Peptidoglycan synthesis</keyword>
<gene>
    <name evidence="1" type="primary">murD</name>
    <name type="ordered locus">PGN_0625</name>
</gene>
<dbReference type="EC" id="6.3.2.9" evidence="1"/>
<dbReference type="EMBL" id="AP009380">
    <property type="protein sequence ID" value="BAG33144.1"/>
    <property type="molecule type" value="Genomic_DNA"/>
</dbReference>
<dbReference type="RefSeq" id="WP_012457657.1">
    <property type="nucleotide sequence ID" value="NC_010729.1"/>
</dbReference>
<dbReference type="SMR" id="B2RIE9"/>
<dbReference type="GeneID" id="29255851"/>
<dbReference type="KEGG" id="pgn:PGN_0625"/>
<dbReference type="eggNOG" id="COG0771">
    <property type="taxonomic scope" value="Bacteria"/>
</dbReference>
<dbReference type="HOGENOM" id="CLU_032540_0_0_10"/>
<dbReference type="OrthoDB" id="9809796at2"/>
<dbReference type="BioCyc" id="PGIN431947:G1G2V-686-MONOMER"/>
<dbReference type="UniPathway" id="UPA00219"/>
<dbReference type="Proteomes" id="UP000008842">
    <property type="component" value="Chromosome"/>
</dbReference>
<dbReference type="GO" id="GO:0005737">
    <property type="term" value="C:cytoplasm"/>
    <property type="evidence" value="ECO:0007669"/>
    <property type="project" value="UniProtKB-SubCell"/>
</dbReference>
<dbReference type="GO" id="GO:0005524">
    <property type="term" value="F:ATP binding"/>
    <property type="evidence" value="ECO:0007669"/>
    <property type="project" value="UniProtKB-UniRule"/>
</dbReference>
<dbReference type="GO" id="GO:0008764">
    <property type="term" value="F:UDP-N-acetylmuramoylalanine-D-glutamate ligase activity"/>
    <property type="evidence" value="ECO:0007669"/>
    <property type="project" value="UniProtKB-UniRule"/>
</dbReference>
<dbReference type="GO" id="GO:0051301">
    <property type="term" value="P:cell division"/>
    <property type="evidence" value="ECO:0007669"/>
    <property type="project" value="UniProtKB-KW"/>
</dbReference>
<dbReference type="GO" id="GO:0071555">
    <property type="term" value="P:cell wall organization"/>
    <property type="evidence" value="ECO:0007669"/>
    <property type="project" value="UniProtKB-KW"/>
</dbReference>
<dbReference type="GO" id="GO:0009252">
    <property type="term" value="P:peptidoglycan biosynthetic process"/>
    <property type="evidence" value="ECO:0007669"/>
    <property type="project" value="UniProtKB-UniRule"/>
</dbReference>
<dbReference type="GO" id="GO:0008360">
    <property type="term" value="P:regulation of cell shape"/>
    <property type="evidence" value="ECO:0007669"/>
    <property type="project" value="UniProtKB-KW"/>
</dbReference>
<dbReference type="Gene3D" id="3.90.190.20">
    <property type="entry name" value="Mur ligase, C-terminal domain"/>
    <property type="match status" value="1"/>
</dbReference>
<dbReference type="Gene3D" id="3.40.1190.10">
    <property type="entry name" value="Mur-like, catalytic domain"/>
    <property type="match status" value="1"/>
</dbReference>
<dbReference type="Gene3D" id="3.40.50.720">
    <property type="entry name" value="NAD(P)-binding Rossmann-like Domain"/>
    <property type="match status" value="1"/>
</dbReference>
<dbReference type="HAMAP" id="MF_00639">
    <property type="entry name" value="MurD"/>
    <property type="match status" value="1"/>
</dbReference>
<dbReference type="InterPro" id="IPR036565">
    <property type="entry name" value="Mur-like_cat_sf"/>
</dbReference>
<dbReference type="InterPro" id="IPR004101">
    <property type="entry name" value="Mur_ligase_C"/>
</dbReference>
<dbReference type="InterPro" id="IPR036615">
    <property type="entry name" value="Mur_ligase_C_dom_sf"/>
</dbReference>
<dbReference type="InterPro" id="IPR013221">
    <property type="entry name" value="Mur_ligase_cen"/>
</dbReference>
<dbReference type="InterPro" id="IPR005762">
    <property type="entry name" value="MurD"/>
</dbReference>
<dbReference type="NCBIfam" id="TIGR01087">
    <property type="entry name" value="murD"/>
    <property type="match status" value="1"/>
</dbReference>
<dbReference type="PANTHER" id="PTHR43692">
    <property type="entry name" value="UDP-N-ACETYLMURAMOYLALANINE--D-GLUTAMATE LIGASE"/>
    <property type="match status" value="1"/>
</dbReference>
<dbReference type="PANTHER" id="PTHR43692:SF1">
    <property type="entry name" value="UDP-N-ACETYLMURAMOYLALANINE--D-GLUTAMATE LIGASE"/>
    <property type="match status" value="1"/>
</dbReference>
<dbReference type="Pfam" id="PF02875">
    <property type="entry name" value="Mur_ligase_C"/>
    <property type="match status" value="1"/>
</dbReference>
<dbReference type="Pfam" id="PF08245">
    <property type="entry name" value="Mur_ligase_M"/>
    <property type="match status" value="1"/>
</dbReference>
<dbReference type="Pfam" id="PF21799">
    <property type="entry name" value="MurD-like_N"/>
    <property type="match status" value="1"/>
</dbReference>
<dbReference type="Pfam" id="PF21377">
    <property type="entry name" value="MurD_N"/>
    <property type="match status" value="1"/>
</dbReference>
<dbReference type="SUPFAM" id="SSF51984">
    <property type="entry name" value="MurCD N-terminal domain"/>
    <property type="match status" value="1"/>
</dbReference>
<dbReference type="SUPFAM" id="SSF53623">
    <property type="entry name" value="MurD-like peptide ligases, catalytic domain"/>
    <property type="match status" value="1"/>
</dbReference>
<dbReference type="SUPFAM" id="SSF53244">
    <property type="entry name" value="MurD-like peptide ligases, peptide-binding domain"/>
    <property type="match status" value="1"/>
</dbReference>